<reference key="1">
    <citation type="journal article" date="2011" name="MBio">
        <title>Novel metabolic attributes of the genus Cyanothece, comprising a group of unicellular nitrogen-fixing Cyanobacteria.</title>
        <authorList>
            <person name="Bandyopadhyay A."/>
            <person name="Elvitigala T."/>
            <person name="Welsh E."/>
            <person name="Stockel J."/>
            <person name="Liberton M."/>
            <person name="Min H."/>
            <person name="Sherman L.A."/>
            <person name="Pakrasi H.B."/>
        </authorList>
    </citation>
    <scope>NUCLEOTIDE SEQUENCE [LARGE SCALE GENOMIC DNA]</scope>
    <source>
        <strain>PCC 8801 / RF-1</strain>
    </source>
</reference>
<accession>B7K2S1</accession>
<evidence type="ECO:0000255" key="1">
    <source>
        <dbReference type="HAMAP-Rule" id="MF_00006"/>
    </source>
</evidence>
<sequence length="462" mass="51589">MTKQKTWSDRFEGSLHPAIVEFNASIGFDIELIEYDLTGSIAHAQMLAHTGIISPEEAQKLTQGLEQIRQEYRQGEFKPGIDQEDVHFAVERRLTEIVGDVGKKLHTARSRNDQVGTDIRLYLRDQISQIRAQLREFQQVLVNHAENHIETLIPGYTHLQRAQPISLAHHLLAYFQMAQRDWERLGEIYARTNISPLGCGALAGTTFPIDRHYSAELLQFQGVYGNSLDGVSDRDFAIEFLNAASLIMVHLSRLSEEMILWSSHEFSFISLTDSCATGSSIMPQKKNPDVPELVRGKAGRVFGHLQGMLVLMKGLPLAYNKDLQEDKEAIFDGVKTVKVCLEAMTILLAEGIKFREERLAEAVSEDFSNATDVADYLAAKGIPFREAYNLVGKVVKTSSAAGKLLKDLSLEEWQALHPAFEADIYDAIAPKQVVAARNSYGGTGFEQIRQAITRAKAQLESS</sequence>
<proteinExistence type="inferred from homology"/>
<organism>
    <name type="scientific">Rippkaea orientalis (strain PCC 8801 / RF-1)</name>
    <name type="common">Cyanothece sp. (strain PCC 8801)</name>
    <dbReference type="NCBI Taxonomy" id="41431"/>
    <lineage>
        <taxon>Bacteria</taxon>
        <taxon>Bacillati</taxon>
        <taxon>Cyanobacteriota</taxon>
        <taxon>Cyanophyceae</taxon>
        <taxon>Oscillatoriophycideae</taxon>
        <taxon>Chroococcales</taxon>
        <taxon>Aphanothecaceae</taxon>
        <taxon>Rippkaea</taxon>
        <taxon>Rippkaea orientalis</taxon>
    </lineage>
</organism>
<dbReference type="EC" id="4.3.2.1" evidence="1"/>
<dbReference type="EMBL" id="CP001287">
    <property type="protein sequence ID" value="ACK67622.1"/>
    <property type="molecule type" value="Genomic_DNA"/>
</dbReference>
<dbReference type="RefSeq" id="WP_012596880.1">
    <property type="nucleotide sequence ID" value="NC_011726.1"/>
</dbReference>
<dbReference type="SMR" id="B7K2S1"/>
<dbReference type="STRING" id="41431.PCC8801_3660"/>
<dbReference type="KEGG" id="cyp:PCC8801_3660"/>
<dbReference type="eggNOG" id="COG0165">
    <property type="taxonomic scope" value="Bacteria"/>
</dbReference>
<dbReference type="HOGENOM" id="CLU_027272_2_3_3"/>
<dbReference type="OrthoDB" id="9769623at2"/>
<dbReference type="UniPathway" id="UPA00068">
    <property type="reaction ID" value="UER00114"/>
</dbReference>
<dbReference type="Proteomes" id="UP000008204">
    <property type="component" value="Chromosome"/>
</dbReference>
<dbReference type="GO" id="GO:0005829">
    <property type="term" value="C:cytosol"/>
    <property type="evidence" value="ECO:0007669"/>
    <property type="project" value="TreeGrafter"/>
</dbReference>
<dbReference type="GO" id="GO:0004056">
    <property type="term" value="F:argininosuccinate lyase activity"/>
    <property type="evidence" value="ECO:0007669"/>
    <property type="project" value="UniProtKB-UniRule"/>
</dbReference>
<dbReference type="GO" id="GO:0042450">
    <property type="term" value="P:arginine biosynthetic process via ornithine"/>
    <property type="evidence" value="ECO:0007669"/>
    <property type="project" value="InterPro"/>
</dbReference>
<dbReference type="GO" id="GO:0006526">
    <property type="term" value="P:L-arginine biosynthetic process"/>
    <property type="evidence" value="ECO:0007669"/>
    <property type="project" value="UniProtKB-UniRule"/>
</dbReference>
<dbReference type="CDD" id="cd01359">
    <property type="entry name" value="Argininosuccinate_lyase"/>
    <property type="match status" value="1"/>
</dbReference>
<dbReference type="FunFam" id="1.10.275.10:FF:000002">
    <property type="entry name" value="Argininosuccinate lyase"/>
    <property type="match status" value="1"/>
</dbReference>
<dbReference type="FunFam" id="1.10.40.30:FF:000001">
    <property type="entry name" value="Argininosuccinate lyase"/>
    <property type="match status" value="1"/>
</dbReference>
<dbReference type="FunFam" id="1.20.200.10:FF:000015">
    <property type="entry name" value="argininosuccinate lyase isoform X2"/>
    <property type="match status" value="1"/>
</dbReference>
<dbReference type="Gene3D" id="1.10.40.30">
    <property type="entry name" value="Fumarase/aspartase (C-terminal domain)"/>
    <property type="match status" value="1"/>
</dbReference>
<dbReference type="Gene3D" id="1.20.200.10">
    <property type="entry name" value="Fumarase/aspartase (Central domain)"/>
    <property type="match status" value="1"/>
</dbReference>
<dbReference type="Gene3D" id="1.10.275.10">
    <property type="entry name" value="Fumarase/aspartase (N-terminal domain)"/>
    <property type="match status" value="1"/>
</dbReference>
<dbReference type="HAMAP" id="MF_00006">
    <property type="entry name" value="Arg_succ_lyase"/>
    <property type="match status" value="1"/>
</dbReference>
<dbReference type="InterPro" id="IPR029419">
    <property type="entry name" value="Arg_succ_lyase_C"/>
</dbReference>
<dbReference type="InterPro" id="IPR009049">
    <property type="entry name" value="Argininosuccinate_lyase"/>
</dbReference>
<dbReference type="InterPro" id="IPR024083">
    <property type="entry name" value="Fumarase/histidase_N"/>
</dbReference>
<dbReference type="InterPro" id="IPR020557">
    <property type="entry name" value="Fumarate_lyase_CS"/>
</dbReference>
<dbReference type="InterPro" id="IPR000362">
    <property type="entry name" value="Fumarate_lyase_fam"/>
</dbReference>
<dbReference type="InterPro" id="IPR022761">
    <property type="entry name" value="Fumarate_lyase_N"/>
</dbReference>
<dbReference type="InterPro" id="IPR008948">
    <property type="entry name" value="L-Aspartase-like"/>
</dbReference>
<dbReference type="NCBIfam" id="TIGR00838">
    <property type="entry name" value="argH"/>
    <property type="match status" value="1"/>
</dbReference>
<dbReference type="PANTHER" id="PTHR43814">
    <property type="entry name" value="ARGININOSUCCINATE LYASE"/>
    <property type="match status" value="1"/>
</dbReference>
<dbReference type="PANTHER" id="PTHR43814:SF1">
    <property type="entry name" value="ARGININOSUCCINATE LYASE"/>
    <property type="match status" value="1"/>
</dbReference>
<dbReference type="Pfam" id="PF14698">
    <property type="entry name" value="ASL_C2"/>
    <property type="match status" value="1"/>
</dbReference>
<dbReference type="Pfam" id="PF00206">
    <property type="entry name" value="Lyase_1"/>
    <property type="match status" value="1"/>
</dbReference>
<dbReference type="PRINTS" id="PR00145">
    <property type="entry name" value="ARGSUCLYASE"/>
</dbReference>
<dbReference type="PRINTS" id="PR00149">
    <property type="entry name" value="FUMRATELYASE"/>
</dbReference>
<dbReference type="SUPFAM" id="SSF48557">
    <property type="entry name" value="L-aspartase-like"/>
    <property type="match status" value="1"/>
</dbReference>
<dbReference type="PROSITE" id="PS00163">
    <property type="entry name" value="FUMARATE_LYASES"/>
    <property type="match status" value="1"/>
</dbReference>
<keyword id="KW-0028">Amino-acid biosynthesis</keyword>
<keyword id="KW-0055">Arginine biosynthesis</keyword>
<keyword id="KW-0963">Cytoplasm</keyword>
<keyword id="KW-0456">Lyase</keyword>
<keyword id="KW-1185">Reference proteome</keyword>
<feature type="chain" id="PRO_1000116201" description="Argininosuccinate lyase">
    <location>
        <begin position="1"/>
        <end position="462"/>
    </location>
</feature>
<name>ARLY_RIPO1</name>
<gene>
    <name evidence="1" type="primary">argH</name>
    <name type="ordered locus">PCC8801_3660</name>
</gene>
<protein>
    <recommendedName>
        <fullName evidence="1">Argininosuccinate lyase</fullName>
        <shortName evidence="1">ASAL</shortName>
        <ecNumber evidence="1">4.3.2.1</ecNumber>
    </recommendedName>
    <alternativeName>
        <fullName evidence="1">Arginosuccinase</fullName>
    </alternativeName>
</protein>
<comment type="catalytic activity">
    <reaction evidence="1">
        <text>2-(N(omega)-L-arginino)succinate = fumarate + L-arginine</text>
        <dbReference type="Rhea" id="RHEA:24020"/>
        <dbReference type="ChEBI" id="CHEBI:29806"/>
        <dbReference type="ChEBI" id="CHEBI:32682"/>
        <dbReference type="ChEBI" id="CHEBI:57472"/>
        <dbReference type="EC" id="4.3.2.1"/>
    </reaction>
</comment>
<comment type="pathway">
    <text evidence="1">Amino-acid biosynthesis; L-arginine biosynthesis; L-arginine from L-ornithine and carbamoyl phosphate: step 3/3.</text>
</comment>
<comment type="subcellular location">
    <subcellularLocation>
        <location evidence="1">Cytoplasm</location>
    </subcellularLocation>
</comment>
<comment type="similarity">
    <text evidence="1">Belongs to the lyase 1 family. Argininosuccinate lyase subfamily.</text>
</comment>